<feature type="chain" id="PRO_0000211592" description="DASH complex subunit DAD2">
    <location>
        <begin position="1"/>
        <end position="125"/>
    </location>
</feature>
<feature type="region of interest" description="Disordered" evidence="3">
    <location>
        <begin position="79"/>
        <end position="125"/>
    </location>
</feature>
<feature type="compositionally biased region" description="Acidic residues" evidence="3">
    <location>
        <begin position="101"/>
        <end position="125"/>
    </location>
</feature>
<gene>
    <name type="primary">DAD2</name>
    <name type="ordered locus">CAALFM_C205210WA</name>
    <name type="ORF">CaO19.3551</name>
</gene>
<reference key="1">
    <citation type="journal article" date="2004" name="Proc. Natl. Acad. Sci. U.S.A.">
        <title>The diploid genome sequence of Candida albicans.</title>
        <authorList>
            <person name="Jones T."/>
            <person name="Federspiel N.A."/>
            <person name="Chibana H."/>
            <person name="Dungan J."/>
            <person name="Kalman S."/>
            <person name="Magee B.B."/>
            <person name="Newport G."/>
            <person name="Thorstenson Y.R."/>
            <person name="Agabian N."/>
            <person name="Magee P.T."/>
            <person name="Davis R.W."/>
            <person name="Scherer S."/>
        </authorList>
    </citation>
    <scope>NUCLEOTIDE SEQUENCE [LARGE SCALE GENOMIC DNA]</scope>
    <source>
        <strain>SC5314 / ATCC MYA-2876</strain>
    </source>
</reference>
<reference key="2">
    <citation type="journal article" date="2007" name="Genome Biol.">
        <title>Assembly of the Candida albicans genome into sixteen supercontigs aligned on the eight chromosomes.</title>
        <authorList>
            <person name="van het Hoog M."/>
            <person name="Rast T.J."/>
            <person name="Martchenko M."/>
            <person name="Grindle S."/>
            <person name="Dignard D."/>
            <person name="Hogues H."/>
            <person name="Cuomo C."/>
            <person name="Berriman M."/>
            <person name="Scherer S."/>
            <person name="Magee B.B."/>
            <person name="Whiteway M."/>
            <person name="Chibana H."/>
            <person name="Nantel A."/>
            <person name="Magee P.T."/>
        </authorList>
    </citation>
    <scope>GENOME REANNOTATION</scope>
    <source>
        <strain>SC5314 / ATCC MYA-2876</strain>
    </source>
</reference>
<reference key="3">
    <citation type="journal article" date="2013" name="Genome Biol.">
        <title>Assembly of a phased diploid Candida albicans genome facilitates allele-specific measurements and provides a simple model for repeat and indel structure.</title>
        <authorList>
            <person name="Muzzey D."/>
            <person name="Schwartz K."/>
            <person name="Weissman J.S."/>
            <person name="Sherlock G."/>
        </authorList>
    </citation>
    <scope>NUCLEOTIDE SEQUENCE [LARGE SCALE GENOMIC DNA]</scope>
    <scope>GENOME REANNOTATION</scope>
    <source>
        <strain>SC5314 / ATCC MYA-2876</strain>
    </source>
</reference>
<reference key="4">
    <citation type="journal article" date="2011" name="Curr. Biol.">
        <title>The requirement for the Dam1 complex is dependent upon the number of kinetochore proteins and microtubules.</title>
        <authorList>
            <person name="Burrack L.S."/>
            <person name="Applen S.E."/>
            <person name="Berman J."/>
        </authorList>
    </citation>
    <scope>SUBCELLULAR LOCATION</scope>
    <scope>DISRUPTION PHENOTYPE</scope>
</reference>
<reference key="5">
    <citation type="journal article" date="2011" name="Eukaryot. Cell">
        <title>The essentiality of the fungus-specific Dam1 complex is correlated with a one-kinetochore-one-microtubule interaction present throughout the cell cycle, independent of the nature of a centromere.</title>
        <authorList>
            <person name="Thakur J."/>
            <person name="Sanyal K."/>
        </authorList>
    </citation>
    <scope>SUBCELLULAR LOCATION</scope>
    <scope>DISRUPTION PHENOTYPE</scope>
</reference>
<comment type="function">
    <text evidence="1">Component of the DASH complex that connects microtubules with kinetochores and couples microtubule depolymerisation to chromosome movement; it is involved in retrieving kinetochores to the spindle poles before their re-orientation on the spindle in early mitosis and allows microtubule depolymerization to pull chromosomes apart and resist detachment during anaphase. Kinetochores, consisting of a centromere-associated inner segment and a microtubule-contacting outer segment, play a crucial role in chromosome segregation by mediating the physical connection between centromeric DNA and microtubules. Kinetochores also serve as an input point for the spindle assembly checkpoint, which delays anaphase until all chromosomes have bioriented on the mitotic spindle.</text>
</comment>
<comment type="subunit">
    <text evidence="1 2">Component of the DASH complex consisting of ASK1, DAD1, DAD2, DAD3, DAD4, DAM1, DUO1, HSK3, SPC19 and SPC34, with a stoichiometry of one copy of each subunit per complex. Multiple DASH complexes oligomerize to form a ring that encircles spindle microtubules and organizes the rod-like NDC80 complexes of the outer kinetochore. DASH complex oligomerization strengthens microtubule attachments (By similarity). On cytoplasmic microtubules, DASH complexes appear to form patches instead of rings (By similarity).</text>
</comment>
<comment type="subcellular location">
    <subcellularLocation>
        <location evidence="4 5">Nucleus</location>
    </subcellularLocation>
    <subcellularLocation>
        <location evidence="5">Cytoplasm</location>
        <location evidence="5">Cytoskeleton</location>
        <location evidence="5">Spindle</location>
    </subcellularLocation>
    <subcellularLocation>
        <location evidence="5">Chromosome</location>
        <location evidence="5">Centromere</location>
        <location evidence="5">Kinetochore</location>
    </subcellularLocation>
    <text evidence="5">Associates with the mitotic spindle and the kinetochore (PubMed:21571923). On the spindle, localizes to the midzone (PubMed:21571923).</text>
</comment>
<comment type="disruption phenotype">
    <text evidence="4 5">Cell cycle arrest in mitosis either with unseparated DNA or with unequally segregated chromosomes (PubMed:21571923). Abnormal spindle morphology (PubMed:21571923). Inviable (PubMed:21549601, PubMed:21571923).</text>
</comment>
<comment type="similarity">
    <text evidence="6">Belongs to the DASH complex DAD2 family.</text>
</comment>
<evidence type="ECO:0000250" key="1">
    <source>
        <dbReference type="UniProtKB" id="P36162"/>
    </source>
</evidence>
<evidence type="ECO:0000250" key="2">
    <source>
        <dbReference type="UniProtKB" id="Q9UTG8"/>
    </source>
</evidence>
<evidence type="ECO:0000256" key="3">
    <source>
        <dbReference type="SAM" id="MobiDB-lite"/>
    </source>
</evidence>
<evidence type="ECO:0000269" key="4">
    <source>
    </source>
</evidence>
<evidence type="ECO:0000269" key="5">
    <source>
    </source>
</evidence>
<evidence type="ECO:0000305" key="6"/>
<dbReference type="EMBL" id="CP017624">
    <property type="protein sequence ID" value="AOW27538.1"/>
    <property type="molecule type" value="Genomic_DNA"/>
</dbReference>
<dbReference type="RefSeq" id="XP_714910.1">
    <property type="nucleotide sequence ID" value="XM_709817.1"/>
</dbReference>
<dbReference type="BMRB" id="Q59ZG8"/>
<dbReference type="SMR" id="Q59ZG8"/>
<dbReference type="BioGRID" id="1226559">
    <property type="interactions" value="1"/>
</dbReference>
<dbReference type="FunCoup" id="Q59ZG8">
    <property type="interactions" value="30"/>
</dbReference>
<dbReference type="STRING" id="237561.Q59ZG8"/>
<dbReference type="EnsemblFungi" id="C2_05210W_A-T">
    <property type="protein sequence ID" value="C2_05210W_A-T-p1"/>
    <property type="gene ID" value="C2_05210W_A"/>
</dbReference>
<dbReference type="GeneID" id="3643465"/>
<dbReference type="KEGG" id="cal:CAALFM_C205210WA"/>
<dbReference type="CGD" id="CAL0000174462">
    <property type="gene designation" value="DAD2"/>
</dbReference>
<dbReference type="VEuPathDB" id="FungiDB:C2_05210W_A"/>
<dbReference type="eggNOG" id="ENOG502SG7I">
    <property type="taxonomic scope" value="Eukaryota"/>
</dbReference>
<dbReference type="HOGENOM" id="CLU_138063_2_0_1"/>
<dbReference type="InParanoid" id="Q59ZG8"/>
<dbReference type="OrthoDB" id="3230169at2759"/>
<dbReference type="Proteomes" id="UP000000559">
    <property type="component" value="Chromosome 2"/>
</dbReference>
<dbReference type="GO" id="GO:0005737">
    <property type="term" value="C:cytoplasm"/>
    <property type="evidence" value="ECO:0007669"/>
    <property type="project" value="UniProtKB-KW"/>
</dbReference>
<dbReference type="GO" id="GO:0042729">
    <property type="term" value="C:DASH complex"/>
    <property type="evidence" value="ECO:0000314"/>
    <property type="project" value="CGD"/>
</dbReference>
<dbReference type="GO" id="GO:0000776">
    <property type="term" value="C:kinetochore"/>
    <property type="evidence" value="ECO:0000314"/>
    <property type="project" value="CGD"/>
</dbReference>
<dbReference type="GO" id="GO:0005874">
    <property type="term" value="C:microtubule"/>
    <property type="evidence" value="ECO:0007669"/>
    <property type="project" value="UniProtKB-KW"/>
</dbReference>
<dbReference type="GO" id="GO:1990023">
    <property type="term" value="C:mitotic spindle midzone"/>
    <property type="evidence" value="ECO:0000318"/>
    <property type="project" value="GO_Central"/>
</dbReference>
<dbReference type="GO" id="GO:0044732">
    <property type="term" value="C:mitotic spindle pole body"/>
    <property type="evidence" value="ECO:0000318"/>
    <property type="project" value="GO_Central"/>
</dbReference>
<dbReference type="GO" id="GO:0005634">
    <property type="term" value="C:nucleus"/>
    <property type="evidence" value="ECO:0000314"/>
    <property type="project" value="UniProtKB"/>
</dbReference>
<dbReference type="GO" id="GO:0051233">
    <property type="term" value="C:spindle midzone"/>
    <property type="evidence" value="ECO:0000314"/>
    <property type="project" value="CGD"/>
</dbReference>
<dbReference type="GO" id="GO:0008608">
    <property type="term" value="P:attachment of spindle microtubules to kinetochore"/>
    <property type="evidence" value="ECO:0000315"/>
    <property type="project" value="CGD"/>
</dbReference>
<dbReference type="GO" id="GO:0051301">
    <property type="term" value="P:cell division"/>
    <property type="evidence" value="ECO:0007669"/>
    <property type="project" value="UniProtKB-KW"/>
</dbReference>
<dbReference type="GO" id="GO:0030447">
    <property type="term" value="P:filamentous growth"/>
    <property type="evidence" value="ECO:0000315"/>
    <property type="project" value="CGD"/>
</dbReference>
<dbReference type="GO" id="GO:0000086">
    <property type="term" value="P:G2/M transition of mitotic cell cycle"/>
    <property type="evidence" value="ECO:0000315"/>
    <property type="project" value="CGD"/>
</dbReference>
<dbReference type="GO" id="GO:1990758">
    <property type="term" value="P:mitotic sister chromatid biorientation"/>
    <property type="evidence" value="ECO:0000250"/>
    <property type="project" value="UniProtKB"/>
</dbReference>
<dbReference type="GO" id="GO:0007052">
    <property type="term" value="P:mitotic spindle organization"/>
    <property type="evidence" value="ECO:0000247"/>
    <property type="project" value="CGD"/>
</dbReference>
<dbReference type="GO" id="GO:1990976">
    <property type="term" value="P:protein transport along microtubule to mitotic spindle pole body"/>
    <property type="evidence" value="ECO:0000250"/>
    <property type="project" value="UniProtKB"/>
</dbReference>
<dbReference type="InterPro" id="IPR013963">
    <property type="entry name" value="DASH_Dad2"/>
</dbReference>
<dbReference type="PANTHER" id="PTHR28036">
    <property type="entry name" value="DASH COMPLEX SUBUNIT DAD2"/>
    <property type="match status" value="1"/>
</dbReference>
<dbReference type="PANTHER" id="PTHR28036:SF1">
    <property type="entry name" value="DASH COMPLEX SUBUNIT DAD2"/>
    <property type="match status" value="1"/>
</dbReference>
<dbReference type="Pfam" id="PF08654">
    <property type="entry name" value="DASH_Dad2"/>
    <property type="match status" value="1"/>
</dbReference>
<protein>
    <recommendedName>
        <fullName>DASH complex subunit DAD2</fullName>
    </recommendedName>
    <alternativeName>
        <fullName>Outer kinetochore protein DAD2</fullName>
    </alternativeName>
</protein>
<keyword id="KW-0131">Cell cycle</keyword>
<keyword id="KW-0132">Cell division</keyword>
<keyword id="KW-0137">Centromere</keyword>
<keyword id="KW-0158">Chromosome</keyword>
<keyword id="KW-0159">Chromosome partition</keyword>
<keyword id="KW-0963">Cytoplasm</keyword>
<keyword id="KW-0206">Cytoskeleton</keyword>
<keyword id="KW-0995">Kinetochore</keyword>
<keyword id="KW-0493">Microtubule</keyword>
<keyword id="KW-0498">Mitosis</keyword>
<keyword id="KW-0539">Nucleus</keyword>
<keyword id="KW-1185">Reference proteome</keyword>
<organism>
    <name type="scientific">Candida albicans (strain SC5314 / ATCC MYA-2876)</name>
    <name type="common">Yeast</name>
    <dbReference type="NCBI Taxonomy" id="237561"/>
    <lineage>
        <taxon>Eukaryota</taxon>
        <taxon>Fungi</taxon>
        <taxon>Dikarya</taxon>
        <taxon>Ascomycota</taxon>
        <taxon>Saccharomycotina</taxon>
        <taxon>Pichiomycetes</taxon>
        <taxon>Debaryomycetaceae</taxon>
        <taxon>Candida/Lodderomyces clade</taxon>
        <taxon>Candida</taxon>
    </lineage>
</organism>
<name>DAD2_CANAL</name>
<sequence>MSKTNTAIYQKIAEKRANLERFREFKELTDDLVLQLESIGDKLETMNGGTASVALILANWKSVVQSISLASLALMKESNDNNKEAFPEPLVRVRVGQSNEENQDEEEADEEEGVRDSEEVEESTE</sequence>
<proteinExistence type="inferred from homology"/>
<accession>Q59ZG8</accession>
<accession>A0A1D8PHB2</accession>